<dbReference type="EMBL" id="L02111">
    <property type="protein sequence ID" value="AAA28405.1"/>
    <property type="molecule type" value="mRNA"/>
</dbReference>
<dbReference type="EMBL" id="L05080">
    <property type="protein sequence ID" value="AAA28420.1"/>
    <property type="molecule type" value="Genomic_DNA"/>
</dbReference>
<dbReference type="EMBL" id="AE014297">
    <property type="protein sequence ID" value="AAF54754.1"/>
    <property type="molecule type" value="Genomic_DNA"/>
</dbReference>
<dbReference type="EMBL" id="AE014297">
    <property type="protein sequence ID" value="AAF54755.1"/>
    <property type="molecule type" value="Genomic_DNA"/>
</dbReference>
<dbReference type="EMBL" id="AY058315">
    <property type="protein sequence ID" value="AAL13544.1"/>
    <property type="molecule type" value="mRNA"/>
</dbReference>
<dbReference type="EMBL" id="BT046129">
    <property type="protein sequence ID" value="ACI46517.1"/>
    <property type="molecule type" value="mRNA"/>
</dbReference>
<dbReference type="PIR" id="A47282">
    <property type="entry name" value="A47282"/>
</dbReference>
<dbReference type="PIR" id="A47283">
    <property type="entry name" value="A47283"/>
</dbReference>
<dbReference type="RefSeq" id="NP_731673.1">
    <molecule id="Q02910-2"/>
    <property type="nucleotide sequence ID" value="NM_169454.2"/>
</dbReference>
<dbReference type="RefSeq" id="NP_731674.1">
    <molecule id="Q02910-1"/>
    <property type="nucleotide sequence ID" value="NM_169455.2"/>
</dbReference>
<dbReference type="SMR" id="Q02910"/>
<dbReference type="BioGRID" id="66588">
    <property type="interactions" value="26"/>
</dbReference>
<dbReference type="FunCoup" id="Q02910">
    <property type="interactions" value="1"/>
</dbReference>
<dbReference type="IntAct" id="Q02910">
    <property type="interactions" value="3"/>
</dbReference>
<dbReference type="STRING" id="7227.FBpp0082021"/>
<dbReference type="GlyGen" id="Q02910">
    <property type="glycosylation" value="7 sites"/>
</dbReference>
<dbReference type="PaxDb" id="7227-FBpp0082021"/>
<dbReference type="DNASU" id="41474"/>
<dbReference type="EnsemblMetazoa" id="FBtr0082547">
    <molecule id="Q02910-2"/>
    <property type="protein sequence ID" value="FBpp0082020"/>
    <property type="gene ID" value="FBgn0261714"/>
</dbReference>
<dbReference type="EnsemblMetazoa" id="FBtr0082548">
    <molecule id="Q02910-1"/>
    <property type="protein sequence ID" value="FBpp0082021"/>
    <property type="gene ID" value="FBgn0261714"/>
</dbReference>
<dbReference type="GeneID" id="41474"/>
<dbReference type="KEGG" id="dme:Dmel_CG4795"/>
<dbReference type="AGR" id="FB:FBgn0261714"/>
<dbReference type="CTD" id="41474"/>
<dbReference type="FlyBase" id="FBgn0261714">
    <property type="gene designation" value="Cpn"/>
</dbReference>
<dbReference type="VEuPathDB" id="VectorBase:FBgn0261714"/>
<dbReference type="eggNOG" id="KOG1216">
    <property type="taxonomic scope" value="Eukaryota"/>
</dbReference>
<dbReference type="InParanoid" id="Q02910"/>
<dbReference type="OMA" id="HSSPKAH"/>
<dbReference type="OrthoDB" id="7873260at2759"/>
<dbReference type="PhylomeDB" id="Q02910"/>
<dbReference type="SignaLink" id="Q02910"/>
<dbReference type="BioGRID-ORCS" id="41474">
    <property type="hits" value="0 hits in 1 CRISPR screen"/>
</dbReference>
<dbReference type="GenomeRNAi" id="41474"/>
<dbReference type="PRO" id="PR:Q02910"/>
<dbReference type="Proteomes" id="UP000000803">
    <property type="component" value="Chromosome 3R"/>
</dbReference>
<dbReference type="Bgee" id="FBgn0261714">
    <property type="expression patterns" value="Expressed in outer photoreceptor cell (Drosophila) in insect head and 22 other cell types or tissues"/>
</dbReference>
<dbReference type="GO" id="GO:0030424">
    <property type="term" value="C:axon"/>
    <property type="evidence" value="ECO:0000314"/>
    <property type="project" value="FlyBase"/>
</dbReference>
<dbReference type="GO" id="GO:0044297">
    <property type="term" value="C:cell body"/>
    <property type="evidence" value="ECO:0000314"/>
    <property type="project" value="FlyBase"/>
</dbReference>
<dbReference type="GO" id="GO:0005737">
    <property type="term" value="C:cytoplasm"/>
    <property type="evidence" value="ECO:0000314"/>
    <property type="project" value="FlyBase"/>
</dbReference>
<dbReference type="GO" id="GO:0005509">
    <property type="term" value="F:calcium ion binding"/>
    <property type="evidence" value="ECO:0000314"/>
    <property type="project" value="FlyBase"/>
</dbReference>
<dbReference type="GO" id="GO:0042052">
    <property type="term" value="P:rhabdomere development"/>
    <property type="evidence" value="ECO:0000315"/>
    <property type="project" value="FlyBase"/>
</dbReference>
<dbReference type="GO" id="GO:0051208">
    <property type="term" value="P:sequestering of calcium ion"/>
    <property type="evidence" value="ECO:0000314"/>
    <property type="project" value="FlyBase"/>
</dbReference>
<dbReference type="GO" id="GO:0007601">
    <property type="term" value="P:visual perception"/>
    <property type="evidence" value="ECO:0007669"/>
    <property type="project" value="UniProtKB-KW"/>
</dbReference>
<dbReference type="PRINTS" id="PR01217">
    <property type="entry name" value="PRICHEXTENSN"/>
</dbReference>
<keyword id="KW-0025">Alternative splicing</keyword>
<keyword id="KW-0106">Calcium</keyword>
<keyword id="KW-0963">Cytoplasm</keyword>
<keyword id="KW-1185">Reference proteome</keyword>
<keyword id="KW-0691">RNA editing</keyword>
<keyword id="KW-0716">Sensory transduction</keyword>
<keyword id="KW-0844">Vision</keyword>
<feature type="chain" id="PRO_0000079290" description="Calphotin">
    <location>
        <begin position="1"/>
        <end position="864"/>
    </location>
</feature>
<feature type="region of interest" description="Leucine-zipper">
    <location>
        <begin position="816"/>
        <end position="858"/>
    </location>
</feature>
<feature type="splice variant" id="VSP_013780" description="In isoform A." evidence="5">
    <location>
        <begin position="644"/>
        <end position="665"/>
    </location>
</feature>
<feature type="sequence variant" description="In RNA edited version.">
    <original>S</original>
    <variation>G</variation>
    <location>
        <position position="402"/>
    </location>
</feature>
<feature type="sequence conflict" description="In Ref. 2; AAA28420." evidence="5" ref="2">
    <original>A</original>
    <variation>AVAPAVVA</variation>
    <location>
        <position position="36"/>
    </location>
</feature>
<feature type="sequence conflict" description="In Ref. 2; AAA28420." evidence="5" ref="2">
    <original>I</original>
    <variation>T</variation>
    <location>
        <position position="43"/>
    </location>
</feature>
<feature type="sequence conflict" description="In Ref. 2; AAA28420." evidence="5" ref="2">
    <original>I</original>
    <variation>V</variation>
    <location>
        <position position="64"/>
    </location>
</feature>
<feature type="sequence conflict" description="In Ref. 1; AAA28405." evidence="5" ref="1">
    <original>A</original>
    <variation>T</variation>
    <location>
        <position position="76"/>
    </location>
</feature>
<feature type="sequence conflict" description="In Ref. 1; AAA28405." evidence="5" ref="1">
    <location>
        <position position="101"/>
    </location>
</feature>
<feature type="sequence conflict" description="In Ref. 1; AAA28405." evidence="5" ref="1">
    <original>AP</original>
    <variation>VQ</variation>
    <location>
        <begin position="127"/>
        <end position="128"/>
    </location>
</feature>
<feature type="sequence conflict" description="In Ref. 1; AAA28405." evidence="5" ref="1">
    <original>V</original>
    <variation>I</variation>
    <location>
        <position position="155"/>
    </location>
</feature>
<feature type="sequence conflict" description="In Ref. 1; AAA28405." evidence="5" ref="1">
    <original>T</original>
    <variation>S</variation>
    <location>
        <position position="161"/>
    </location>
</feature>
<feature type="sequence conflict" description="In Ref. 2; AAA28420." evidence="5" ref="2">
    <original>A</original>
    <variation>E</variation>
    <location>
        <position position="535"/>
    </location>
</feature>
<feature type="sequence conflict" description="In Ref. 1; AAA28405 and 2; AAA28420." evidence="5" ref="1 2">
    <original>YP</original>
    <variation>FPEA</variation>
    <location>
        <begin position="646"/>
        <end position="647"/>
    </location>
</feature>
<feature type="sequence conflict" description="In Ref. 1; AAA28405." evidence="5" ref="1">
    <original>T</original>
    <variation>I</variation>
    <location>
        <position position="698"/>
    </location>
</feature>
<feature type="sequence conflict" description="In Ref. 1; AAA28405." evidence="5" ref="1">
    <original>L</original>
    <variation>V</variation>
    <location>
        <position position="702"/>
    </location>
</feature>
<feature type="sequence conflict" description="In Ref. 1; AAA28405." evidence="5" ref="1">
    <original>E</original>
    <variation>D</variation>
    <location>
        <position position="720"/>
    </location>
</feature>
<feature type="sequence conflict" description="In Ref. 1; AAA28405 and 2; AAA28420." evidence="5" ref="1 2">
    <original>A</original>
    <variation>P</variation>
    <location>
        <position position="784"/>
    </location>
</feature>
<name>CPN_DROME</name>
<evidence type="ECO:0000269" key="1">
    <source>
    </source>
</evidence>
<evidence type="ECO:0000269" key="2">
    <source>
    </source>
</evidence>
<evidence type="ECO:0000269" key="3">
    <source>
    </source>
</evidence>
<evidence type="ECO:0000269" key="4">
    <source>
    </source>
</evidence>
<evidence type="ECO:0000305" key="5"/>
<sequence>MEPGTIPSPVSAPVAAPVTPSAVAAPVQVVSPAAVAPAPAAPIAVTPVAPPPTLASVQPATVTIPAPAPIAAASVAPVASVAPPVVAAPTPPAASPVSTPPVAVAQIPVAVSAPVAPPVAATPTPVAPIPVAAPVIATPPVAASAPTPAAVTPVVSPVIATPPVVPANTTVPVAAPVAAVPAAVPVVAPVLAPAVAPAVAPVVAETPAPPPVAEIPVATIPECVAPLIPEVSVVATKPLAAAEPVVVAPPATETPVVAPAAASPHVSVAPAVETAVVAPVSASTEPPVAAATLTTAPETPALAPVVAESQVAANTVVATPPTPAPEPETIAPPVVAETPEVASVAVAETTPPVVPPVAAESIPAPVVATTPVPATLAVTDPDVTASAVPELPPVIAPSPVPSAVAETPVDLAPPVLPPVAAEPVPAVVAEETPETPAPASAPVTIAALDIPEVAPVIAAPSDAPAEAPSAAAPIVSTPPTTASVPETTAPPAAVPTEPIDVSVLSEAAIETPVAPPVEVTTEVAVADVAPPEAAADLIIEPVEPPAPIPDLLEQTTSVPAVEAAESTSSPIPETSLPPPNEAVASPEVAVAPITAPEPIPEPEPSLATPTEPIPVEAPVVIQEAVDAVEVPVTETSTSIPETTVEYPVAEKVLDPAITEAPVTTQEPDVANINDGAPATEITTPAVEIVTAAAEVSDTAIPLIDPPVPQEIAVAEIPETETKPAEVIVEQSTIPIEAPVPEVSKYAEPVISEAPAAEVPITAGDNPDNTSVGISEVVPTIAEKAVEEVPTSEIPEQSSSPSDSVPVAKITPLLRDLQTTDVSLLAIAATLDAIGEKLKDQKARNQQVMDRLCEIEKILGPPKSN</sequence>
<organism>
    <name type="scientific">Drosophila melanogaster</name>
    <name type="common">Fruit fly</name>
    <dbReference type="NCBI Taxonomy" id="7227"/>
    <lineage>
        <taxon>Eukaryota</taxon>
        <taxon>Metazoa</taxon>
        <taxon>Ecdysozoa</taxon>
        <taxon>Arthropoda</taxon>
        <taxon>Hexapoda</taxon>
        <taxon>Insecta</taxon>
        <taxon>Pterygota</taxon>
        <taxon>Neoptera</taxon>
        <taxon>Endopterygota</taxon>
        <taxon>Diptera</taxon>
        <taxon>Brachycera</taxon>
        <taxon>Muscomorpha</taxon>
        <taxon>Ephydroidea</taxon>
        <taxon>Drosophilidae</taxon>
        <taxon>Drosophila</taxon>
        <taxon>Sophophora</taxon>
    </lineage>
</organism>
<gene>
    <name type="primary">Cpn</name>
    <name type="synonym">cap</name>
    <name type="ORF">CG4795</name>
</gene>
<protein>
    <recommendedName>
        <fullName>Calphotin</fullName>
    </recommendedName>
</protein>
<comment type="function">
    <text evidence="3 4">Plays important roles in both rhabdomere development and in photoreceptor cell survival. Might function as a calcium-sequestering 'sponge' to regulate the amount of free cytoplasmic calcium. It binds 0.3 mole of Ca(2+) per mole of protein.</text>
</comment>
<comment type="subunit">
    <text evidence="5">Homodimer.</text>
</comment>
<comment type="subcellular location">
    <subcellularLocation>
        <location evidence="3">Cytoplasm</location>
    </subcellularLocation>
    <text>Hypodense compartment.</text>
</comment>
<comment type="alternative products">
    <event type="alternative splicing"/>
    <isoform>
        <id>Q02910-1</id>
        <name>B</name>
        <sequence type="displayed"/>
    </isoform>
    <isoform>
        <id>Q02910-2</id>
        <name>A</name>
        <sequence type="described" ref="VSP_013780"/>
    </isoform>
</comment>
<comment type="tissue specificity">
    <text evidence="3 4">Soma and axons of photoreceptor cells of compound eyes and ocelli.</text>
</comment>
<comment type="developmental stage">
    <text>Expressed early in photoreceptor cell development.</text>
</comment>
<comment type="RNA editing">
    <location>
        <position position="402" evidence="1 2"/>
    </location>
    <text>Partially edited. Target of Adar.</text>
</comment>
<reference key="1">
    <citation type="journal article" date="1993" name="Proc. Natl. Acad. Sci. U.S.A.">
        <title>Calphotin: a Drosophila photoreceptor cell calcium-binding protein.</title>
        <authorList>
            <person name="Martin J.H."/>
            <person name="Benzer S."/>
            <person name="Rudnicka M."/>
            <person name="Miller C.A."/>
        </authorList>
    </citation>
    <scope>NUCLEOTIDE SEQUENCE [MRNA] (ISOFORM B)</scope>
    <scope>FUNCTION</scope>
    <scope>SUBCELLULAR LOCATION</scope>
    <scope>TISSUE SPECIFICITY</scope>
    <source>
        <strain>Canton-S</strain>
        <tissue>Head</tissue>
    </source>
</reference>
<reference key="2">
    <citation type="journal article" date="1993" name="Proc. Natl. Acad. Sci. U.S.A.">
        <title>A Drosophila photoreceptor cell-specific protein, calphotin, binds calcium and contains a leucine zipper.</title>
        <authorList>
            <person name="Ballinger D.G."/>
            <person name="Xue N."/>
            <person name="Harshman K.D."/>
        </authorList>
    </citation>
    <scope>NUCLEOTIDE SEQUENCE [GENOMIC DNA] (ISOFORM B)</scope>
    <scope>FUNCTION</scope>
    <scope>TISSUE SPECIFICITY</scope>
    <source>
        <strain>Canton-S</strain>
        <tissue>Retinal photoreceptor</tissue>
    </source>
</reference>
<reference key="3">
    <citation type="journal article" date="2000" name="Science">
        <title>The genome sequence of Drosophila melanogaster.</title>
        <authorList>
            <person name="Adams M.D."/>
            <person name="Celniker S.E."/>
            <person name="Holt R.A."/>
            <person name="Evans C.A."/>
            <person name="Gocayne J.D."/>
            <person name="Amanatides P.G."/>
            <person name="Scherer S.E."/>
            <person name="Li P.W."/>
            <person name="Hoskins R.A."/>
            <person name="Galle R.F."/>
            <person name="George R.A."/>
            <person name="Lewis S.E."/>
            <person name="Richards S."/>
            <person name="Ashburner M."/>
            <person name="Henderson S.N."/>
            <person name="Sutton G.G."/>
            <person name="Wortman J.R."/>
            <person name="Yandell M.D."/>
            <person name="Zhang Q."/>
            <person name="Chen L.X."/>
            <person name="Brandon R.C."/>
            <person name="Rogers Y.-H.C."/>
            <person name="Blazej R.G."/>
            <person name="Champe M."/>
            <person name="Pfeiffer B.D."/>
            <person name="Wan K.H."/>
            <person name="Doyle C."/>
            <person name="Baxter E.G."/>
            <person name="Helt G."/>
            <person name="Nelson C.R."/>
            <person name="Miklos G.L.G."/>
            <person name="Abril J.F."/>
            <person name="Agbayani A."/>
            <person name="An H.-J."/>
            <person name="Andrews-Pfannkoch C."/>
            <person name="Baldwin D."/>
            <person name="Ballew R.M."/>
            <person name="Basu A."/>
            <person name="Baxendale J."/>
            <person name="Bayraktaroglu L."/>
            <person name="Beasley E.M."/>
            <person name="Beeson K.Y."/>
            <person name="Benos P.V."/>
            <person name="Berman B.P."/>
            <person name="Bhandari D."/>
            <person name="Bolshakov S."/>
            <person name="Borkova D."/>
            <person name="Botchan M.R."/>
            <person name="Bouck J."/>
            <person name="Brokstein P."/>
            <person name="Brottier P."/>
            <person name="Burtis K.C."/>
            <person name="Busam D.A."/>
            <person name="Butler H."/>
            <person name="Cadieu E."/>
            <person name="Center A."/>
            <person name="Chandra I."/>
            <person name="Cherry J.M."/>
            <person name="Cawley S."/>
            <person name="Dahlke C."/>
            <person name="Davenport L.B."/>
            <person name="Davies P."/>
            <person name="de Pablos B."/>
            <person name="Delcher A."/>
            <person name="Deng Z."/>
            <person name="Mays A.D."/>
            <person name="Dew I."/>
            <person name="Dietz S.M."/>
            <person name="Dodson K."/>
            <person name="Doup L.E."/>
            <person name="Downes M."/>
            <person name="Dugan-Rocha S."/>
            <person name="Dunkov B.C."/>
            <person name="Dunn P."/>
            <person name="Durbin K.J."/>
            <person name="Evangelista C.C."/>
            <person name="Ferraz C."/>
            <person name="Ferriera S."/>
            <person name="Fleischmann W."/>
            <person name="Fosler C."/>
            <person name="Gabrielian A.E."/>
            <person name="Garg N.S."/>
            <person name="Gelbart W.M."/>
            <person name="Glasser K."/>
            <person name="Glodek A."/>
            <person name="Gong F."/>
            <person name="Gorrell J.H."/>
            <person name="Gu Z."/>
            <person name="Guan P."/>
            <person name="Harris M."/>
            <person name="Harris N.L."/>
            <person name="Harvey D.A."/>
            <person name="Heiman T.J."/>
            <person name="Hernandez J.R."/>
            <person name="Houck J."/>
            <person name="Hostin D."/>
            <person name="Houston K.A."/>
            <person name="Howland T.J."/>
            <person name="Wei M.-H."/>
            <person name="Ibegwam C."/>
            <person name="Jalali M."/>
            <person name="Kalush F."/>
            <person name="Karpen G.H."/>
            <person name="Ke Z."/>
            <person name="Kennison J.A."/>
            <person name="Ketchum K.A."/>
            <person name="Kimmel B.E."/>
            <person name="Kodira C.D."/>
            <person name="Kraft C.L."/>
            <person name="Kravitz S."/>
            <person name="Kulp D."/>
            <person name="Lai Z."/>
            <person name="Lasko P."/>
            <person name="Lei Y."/>
            <person name="Levitsky A.A."/>
            <person name="Li J.H."/>
            <person name="Li Z."/>
            <person name="Liang Y."/>
            <person name="Lin X."/>
            <person name="Liu X."/>
            <person name="Mattei B."/>
            <person name="McIntosh T.C."/>
            <person name="McLeod M.P."/>
            <person name="McPherson D."/>
            <person name="Merkulov G."/>
            <person name="Milshina N.V."/>
            <person name="Mobarry C."/>
            <person name="Morris J."/>
            <person name="Moshrefi A."/>
            <person name="Mount S.M."/>
            <person name="Moy M."/>
            <person name="Murphy B."/>
            <person name="Murphy L."/>
            <person name="Muzny D.M."/>
            <person name="Nelson D.L."/>
            <person name="Nelson D.R."/>
            <person name="Nelson K.A."/>
            <person name="Nixon K."/>
            <person name="Nusskern D.R."/>
            <person name="Pacleb J.M."/>
            <person name="Palazzolo M."/>
            <person name="Pittman G.S."/>
            <person name="Pan S."/>
            <person name="Pollard J."/>
            <person name="Puri V."/>
            <person name="Reese M.G."/>
            <person name="Reinert K."/>
            <person name="Remington K."/>
            <person name="Saunders R.D.C."/>
            <person name="Scheeler F."/>
            <person name="Shen H."/>
            <person name="Shue B.C."/>
            <person name="Siden-Kiamos I."/>
            <person name="Simpson M."/>
            <person name="Skupski M.P."/>
            <person name="Smith T.J."/>
            <person name="Spier E."/>
            <person name="Spradling A.C."/>
            <person name="Stapleton M."/>
            <person name="Strong R."/>
            <person name="Sun E."/>
            <person name="Svirskas R."/>
            <person name="Tector C."/>
            <person name="Turner R."/>
            <person name="Venter E."/>
            <person name="Wang A.H."/>
            <person name="Wang X."/>
            <person name="Wang Z.-Y."/>
            <person name="Wassarman D.A."/>
            <person name="Weinstock G.M."/>
            <person name="Weissenbach J."/>
            <person name="Williams S.M."/>
            <person name="Woodage T."/>
            <person name="Worley K.C."/>
            <person name="Wu D."/>
            <person name="Yang S."/>
            <person name="Yao Q.A."/>
            <person name="Ye J."/>
            <person name="Yeh R.-F."/>
            <person name="Zaveri J.S."/>
            <person name="Zhan M."/>
            <person name="Zhang G."/>
            <person name="Zhao Q."/>
            <person name="Zheng L."/>
            <person name="Zheng X.H."/>
            <person name="Zhong F.N."/>
            <person name="Zhong W."/>
            <person name="Zhou X."/>
            <person name="Zhu S.C."/>
            <person name="Zhu X."/>
            <person name="Smith H.O."/>
            <person name="Gibbs R.A."/>
            <person name="Myers E.W."/>
            <person name="Rubin G.M."/>
            <person name="Venter J.C."/>
        </authorList>
    </citation>
    <scope>NUCLEOTIDE SEQUENCE [LARGE SCALE GENOMIC DNA]</scope>
    <source>
        <strain>Berkeley</strain>
    </source>
</reference>
<reference key="4">
    <citation type="journal article" date="2002" name="Genome Biol.">
        <title>Annotation of the Drosophila melanogaster euchromatic genome: a systematic review.</title>
        <authorList>
            <person name="Misra S."/>
            <person name="Crosby M.A."/>
            <person name="Mungall C.J."/>
            <person name="Matthews B.B."/>
            <person name="Campbell K.S."/>
            <person name="Hradecky P."/>
            <person name="Huang Y."/>
            <person name="Kaminker J.S."/>
            <person name="Millburn G.H."/>
            <person name="Prochnik S.E."/>
            <person name="Smith C.D."/>
            <person name="Tupy J.L."/>
            <person name="Whitfield E.J."/>
            <person name="Bayraktaroglu L."/>
            <person name="Berman B.P."/>
            <person name="Bettencourt B.R."/>
            <person name="Celniker S.E."/>
            <person name="de Grey A.D.N.J."/>
            <person name="Drysdale R.A."/>
            <person name="Harris N.L."/>
            <person name="Richter J."/>
            <person name="Russo S."/>
            <person name="Schroeder A.J."/>
            <person name="Shu S.Q."/>
            <person name="Stapleton M."/>
            <person name="Yamada C."/>
            <person name="Ashburner M."/>
            <person name="Gelbart W.M."/>
            <person name="Rubin G.M."/>
            <person name="Lewis S.E."/>
        </authorList>
    </citation>
    <scope>GENOME REANNOTATION</scope>
    <scope>ALTERNATIVE SPLICING</scope>
    <source>
        <strain>Berkeley</strain>
    </source>
</reference>
<reference key="5">
    <citation type="journal article" date="2002" name="Genome Biol.">
        <title>A Drosophila full-length cDNA resource.</title>
        <authorList>
            <person name="Stapleton M."/>
            <person name="Carlson J.W."/>
            <person name="Brokstein P."/>
            <person name="Yu C."/>
            <person name="Champe M."/>
            <person name="George R.A."/>
            <person name="Guarin H."/>
            <person name="Kronmiller B."/>
            <person name="Pacleb J.M."/>
            <person name="Park S."/>
            <person name="Wan K.H."/>
            <person name="Rubin G.M."/>
            <person name="Celniker S.E."/>
        </authorList>
    </citation>
    <scope>NUCLEOTIDE SEQUENCE [LARGE SCALE MRNA] (ISOFORM B)</scope>
    <scope>RNA EDITING OF POSITION 402</scope>
    <source>
        <strain>Berkeley</strain>
        <tissue>Head</tissue>
    </source>
</reference>
<reference key="6">
    <citation type="submission" date="2008-10" db="EMBL/GenBank/DDBJ databases">
        <authorList>
            <person name="Carlson J.W."/>
            <person name="Booth B."/>
            <person name="Frise E."/>
            <person name="Park S."/>
            <person name="Wan K.H."/>
            <person name="Yu C."/>
            <person name="Celniker S.E."/>
        </authorList>
    </citation>
    <scope>NUCLEOTIDE SEQUENCE [LARGE SCALE MRNA]</scope>
    <source>
        <strain>Berkeley</strain>
    </source>
</reference>
<reference key="7">
    <citation type="journal article" date="2006" name="RNA">
        <title>RNA editing in Drosophila melanogaster: new targets and functional consequences.</title>
        <authorList>
            <person name="Stapleton M."/>
            <person name="Carlson J.W."/>
            <person name="Celniker S.E."/>
        </authorList>
    </citation>
    <scope>RNA EDITING OF POSITION 402</scope>
</reference>
<accession>Q02910</accession>
<accession>B5X510</accession>
<accession>Q95U45</accession>
<accession>Q9VGC8</accession>
<accession>Q9VGC9</accession>
<proteinExistence type="evidence at transcript level"/>